<comment type="function">
    <text evidence="2">Component of the ubiquinol-cytochrome c reductase complex (complex III or cytochrome b-c1 complex) that is part of the mitochondrial respiratory chain. The b-c1 complex mediates electron transfer from ubiquinol to cytochrome c. Contributes to the generation of a proton gradient across the mitochondrial membrane that is then used for ATP synthesis.</text>
</comment>
<comment type="cofactor">
    <cofactor evidence="2">
        <name>heme b</name>
        <dbReference type="ChEBI" id="CHEBI:60344"/>
    </cofactor>
    <text evidence="2">Binds 2 heme b groups non-covalently.</text>
</comment>
<comment type="subunit">
    <text evidence="2">The cytochrome bc1 complex contains 11 subunits: 3 respiratory subunits (MT-CYB, CYC1 and UQCRFS1), 2 core proteins (UQCRC1 and UQCRC2) and 6 low-molecular weight proteins (UQCRH/QCR6, UQCRB/QCR7, UQCRQ/QCR8, UQCR10/QCR9, UQCR11/QCR10 and a cleavage product of UQCRFS1). This cytochrome bc1 complex then forms a dimer.</text>
</comment>
<comment type="subcellular location">
    <subcellularLocation>
        <location evidence="2">Mitochondrion inner membrane</location>
        <topology evidence="2">Multi-pass membrane protein</topology>
    </subcellularLocation>
</comment>
<comment type="miscellaneous">
    <text evidence="1">Heme 1 (or BL or b562) is low-potential and absorbs at about 562 nm, and heme 2 (or BH or b566) is high-potential and absorbs at about 566 nm.</text>
</comment>
<comment type="similarity">
    <text evidence="3 4">Belongs to the cytochrome b family.</text>
</comment>
<comment type="caution">
    <text evidence="2">The full-length protein contains only eight transmembrane helices, not nine as predicted by bioinformatics tools.</text>
</comment>
<geneLocation type="mitochondrion"/>
<organism>
    <name type="scientific">Ptiloprora plumbea</name>
    <name type="common">Leaden honeyeater</name>
    <dbReference type="NCBI Taxonomy" id="9148"/>
    <lineage>
        <taxon>Eukaryota</taxon>
        <taxon>Metazoa</taxon>
        <taxon>Chordata</taxon>
        <taxon>Craniata</taxon>
        <taxon>Vertebrata</taxon>
        <taxon>Euteleostomi</taxon>
        <taxon>Archelosauria</taxon>
        <taxon>Archosauria</taxon>
        <taxon>Dinosauria</taxon>
        <taxon>Saurischia</taxon>
        <taxon>Theropoda</taxon>
        <taxon>Coelurosauria</taxon>
        <taxon>Aves</taxon>
        <taxon>Neognathae</taxon>
        <taxon>Neoaves</taxon>
        <taxon>Telluraves</taxon>
        <taxon>Australaves</taxon>
        <taxon>Passeriformes</taxon>
        <taxon>Meliphagoidea</taxon>
        <taxon>Meliphagidae</taxon>
        <taxon>Ptiloprora</taxon>
    </lineage>
</organism>
<name>CYB_PTIPL</name>
<evidence type="ECO:0000250" key="1"/>
<evidence type="ECO:0000250" key="2">
    <source>
        <dbReference type="UniProtKB" id="P00157"/>
    </source>
</evidence>
<evidence type="ECO:0000255" key="3">
    <source>
        <dbReference type="PROSITE-ProRule" id="PRU00967"/>
    </source>
</evidence>
<evidence type="ECO:0000255" key="4">
    <source>
        <dbReference type="PROSITE-ProRule" id="PRU00968"/>
    </source>
</evidence>
<protein>
    <recommendedName>
        <fullName>Cytochrome b</fullName>
    </recommendedName>
    <alternativeName>
        <fullName>Complex III subunit 3</fullName>
    </alternativeName>
    <alternativeName>
        <fullName>Complex III subunit III</fullName>
    </alternativeName>
    <alternativeName>
        <fullName>Cytochrome b-c1 complex subunit 3</fullName>
    </alternativeName>
    <alternativeName>
        <fullName>Ubiquinol-cytochrome-c reductase complex cytochrome b subunit</fullName>
    </alternativeName>
</protein>
<feature type="chain" id="PRO_0000061468" description="Cytochrome b">
    <location>
        <begin position="1" status="less than"/>
        <end position="308" status="greater than"/>
    </location>
</feature>
<feature type="transmembrane region" description="Helical" evidence="2">
    <location>
        <begin position="1"/>
        <end position="21"/>
    </location>
</feature>
<feature type="transmembrane region" description="Helical" evidence="2">
    <location>
        <begin position="45"/>
        <end position="66"/>
    </location>
</feature>
<feature type="transmembrane region" description="Helical" evidence="2">
    <location>
        <begin position="81"/>
        <end position="101"/>
    </location>
</feature>
<feature type="transmembrane region" description="Helical" evidence="2">
    <location>
        <begin position="146"/>
        <end position="166"/>
    </location>
</feature>
<feature type="transmembrane region" description="Helical" evidence="2">
    <location>
        <begin position="194"/>
        <end position="214"/>
    </location>
</feature>
<feature type="transmembrane region" description="Helical" evidence="2">
    <location>
        <begin position="256"/>
        <end position="276"/>
    </location>
</feature>
<feature type="transmembrane region" description="Helical" evidence="2">
    <location>
        <begin position="288"/>
        <end position="308"/>
    </location>
</feature>
<feature type="binding site" description="axial binding residue" evidence="2">
    <location>
        <position position="51"/>
    </location>
    <ligand>
        <name>heme b</name>
        <dbReference type="ChEBI" id="CHEBI:60344"/>
        <label>b562</label>
    </ligand>
    <ligandPart>
        <name>Fe</name>
        <dbReference type="ChEBI" id="CHEBI:18248"/>
    </ligandPart>
</feature>
<feature type="binding site" description="axial binding residue" evidence="2">
    <location>
        <position position="65"/>
    </location>
    <ligand>
        <name>heme b</name>
        <dbReference type="ChEBI" id="CHEBI:60344"/>
        <label>b566</label>
    </ligand>
    <ligandPart>
        <name>Fe</name>
        <dbReference type="ChEBI" id="CHEBI:18248"/>
    </ligandPart>
</feature>
<feature type="binding site" description="axial binding residue" evidence="2">
    <location>
        <position position="150"/>
    </location>
    <ligand>
        <name>heme b</name>
        <dbReference type="ChEBI" id="CHEBI:60344"/>
        <label>b562</label>
    </ligand>
    <ligandPart>
        <name>Fe</name>
        <dbReference type="ChEBI" id="CHEBI:18248"/>
    </ligandPart>
</feature>
<feature type="binding site" description="axial binding residue" evidence="2">
    <location>
        <position position="164"/>
    </location>
    <ligand>
        <name>heme b</name>
        <dbReference type="ChEBI" id="CHEBI:60344"/>
        <label>b566</label>
    </ligand>
    <ligandPart>
        <name>Fe</name>
        <dbReference type="ChEBI" id="CHEBI:18248"/>
    </ligandPart>
</feature>
<feature type="binding site" evidence="2">
    <location>
        <position position="169"/>
    </location>
    <ligand>
        <name>a ubiquinone</name>
        <dbReference type="ChEBI" id="CHEBI:16389"/>
    </ligand>
</feature>
<feature type="non-terminal residue">
    <location>
        <position position="1"/>
    </location>
</feature>
<feature type="non-terminal residue">
    <location>
        <position position="308"/>
    </location>
</feature>
<reference key="1">
    <citation type="journal article" date="1991" name="Proc. R. Soc. B">
        <title>Mitochondrial resolution of a deep branch in the genealogical tree for perching birds.</title>
        <authorList>
            <person name="Edwards S.V."/>
            <person name="Arctander P."/>
            <person name="Wilson A.C."/>
        </authorList>
    </citation>
    <scope>NUCLEOTIDE SEQUENCE [GENOMIC DNA]</scope>
</reference>
<reference key="2">
    <citation type="journal article" date="1996" name="Proc. R. Soc. B">
        <authorList>
            <person name="Edwards S.V."/>
            <person name="Arctander P."/>
        </authorList>
    </citation>
    <scope>ERRATUM OF PUBMED:1676522</scope>
</reference>
<proteinExistence type="inferred from homology"/>
<dbReference type="EMBL" id="X60943">
    <property type="protein sequence ID" value="CAA43278.1"/>
    <property type="molecule type" value="Genomic_DNA"/>
</dbReference>
<dbReference type="PIR" id="S22929">
    <property type="entry name" value="S22929"/>
</dbReference>
<dbReference type="SMR" id="P29640"/>
<dbReference type="GO" id="GO:0005743">
    <property type="term" value="C:mitochondrial inner membrane"/>
    <property type="evidence" value="ECO:0007669"/>
    <property type="project" value="UniProtKB-SubCell"/>
</dbReference>
<dbReference type="GO" id="GO:0046872">
    <property type="term" value="F:metal ion binding"/>
    <property type="evidence" value="ECO:0007669"/>
    <property type="project" value="UniProtKB-KW"/>
</dbReference>
<dbReference type="GO" id="GO:0008121">
    <property type="term" value="F:ubiquinol-cytochrome-c reductase activity"/>
    <property type="evidence" value="ECO:0007669"/>
    <property type="project" value="TreeGrafter"/>
</dbReference>
<dbReference type="GO" id="GO:0006122">
    <property type="term" value="P:mitochondrial electron transport, ubiquinol to cytochrome c"/>
    <property type="evidence" value="ECO:0007669"/>
    <property type="project" value="TreeGrafter"/>
</dbReference>
<dbReference type="CDD" id="cd00290">
    <property type="entry name" value="cytochrome_b_C"/>
    <property type="match status" value="1"/>
</dbReference>
<dbReference type="CDD" id="cd00284">
    <property type="entry name" value="Cytochrome_b_N"/>
    <property type="match status" value="1"/>
</dbReference>
<dbReference type="FunFam" id="1.20.810.10:FF:000002">
    <property type="entry name" value="Cytochrome b"/>
    <property type="match status" value="1"/>
</dbReference>
<dbReference type="Gene3D" id="1.20.810.10">
    <property type="entry name" value="Cytochrome Bc1 Complex, Chain C"/>
    <property type="match status" value="1"/>
</dbReference>
<dbReference type="InterPro" id="IPR005798">
    <property type="entry name" value="Cyt_b/b6_C"/>
</dbReference>
<dbReference type="InterPro" id="IPR036150">
    <property type="entry name" value="Cyt_b/b6_C_sf"/>
</dbReference>
<dbReference type="InterPro" id="IPR005797">
    <property type="entry name" value="Cyt_b/b6_N"/>
</dbReference>
<dbReference type="InterPro" id="IPR027387">
    <property type="entry name" value="Cytb/b6-like_sf"/>
</dbReference>
<dbReference type="InterPro" id="IPR048260">
    <property type="entry name" value="Cytochrome_b_C_euk/bac"/>
</dbReference>
<dbReference type="InterPro" id="IPR048259">
    <property type="entry name" value="Cytochrome_b_N_euk/bac"/>
</dbReference>
<dbReference type="InterPro" id="IPR016174">
    <property type="entry name" value="Di-haem_cyt_TM"/>
</dbReference>
<dbReference type="PANTHER" id="PTHR19271">
    <property type="entry name" value="CYTOCHROME B"/>
    <property type="match status" value="1"/>
</dbReference>
<dbReference type="PANTHER" id="PTHR19271:SF16">
    <property type="entry name" value="CYTOCHROME B"/>
    <property type="match status" value="1"/>
</dbReference>
<dbReference type="Pfam" id="PF00032">
    <property type="entry name" value="Cytochrom_B_C"/>
    <property type="match status" value="1"/>
</dbReference>
<dbReference type="Pfam" id="PF00033">
    <property type="entry name" value="Cytochrome_B"/>
    <property type="match status" value="1"/>
</dbReference>
<dbReference type="SUPFAM" id="SSF81648">
    <property type="entry name" value="a domain/subunit of cytochrome bc1 complex (Ubiquinol-cytochrome c reductase)"/>
    <property type="match status" value="1"/>
</dbReference>
<dbReference type="SUPFAM" id="SSF81342">
    <property type="entry name" value="Transmembrane di-heme cytochromes"/>
    <property type="match status" value="1"/>
</dbReference>
<dbReference type="PROSITE" id="PS51003">
    <property type="entry name" value="CYTB_CTER"/>
    <property type="match status" value="1"/>
</dbReference>
<dbReference type="PROSITE" id="PS51002">
    <property type="entry name" value="CYTB_NTER"/>
    <property type="match status" value="1"/>
</dbReference>
<keyword id="KW-0249">Electron transport</keyword>
<keyword id="KW-0349">Heme</keyword>
<keyword id="KW-0408">Iron</keyword>
<keyword id="KW-0472">Membrane</keyword>
<keyword id="KW-0479">Metal-binding</keyword>
<keyword id="KW-0496">Mitochondrion</keyword>
<keyword id="KW-0999">Mitochondrion inner membrane</keyword>
<keyword id="KW-0679">Respiratory chain</keyword>
<keyword id="KW-0812">Transmembrane</keyword>
<keyword id="KW-1133">Transmembrane helix</keyword>
<keyword id="KW-0813">Transport</keyword>
<keyword id="KW-0830">Ubiquinone</keyword>
<accession>P29640</accession>
<gene>
    <name type="primary">MT-CYB</name>
    <name type="synonym">COB</name>
    <name type="synonym">CYTB</name>
    <name type="synonym">MTCYB</name>
</gene>
<sequence>FGSLLGICLLTQIITGLLLATHYTADTSLAFSSVAHMCRDVQFGWLIRNLHANGASFFFICIYIHIGRGLYYGSYLNKETWNVGVILLLTLMATAFVGYVLPWGQMSFWGATVITNLFSAIPYIGQTLVEWAWGGFSVDNPTLTRFFALHFLLPFAITGLTLVHLTFLHETGSNNPLGIPSDCDKIPFHPYYSMKDILGFALMIIPLAALALFSPNLLGDPENFTPANPLATPPHIKPEWYFLFAYAILRSIPNKLGGVLALAASILVLFLIPLLHKSKQRSMTFRPLSQILFWTLVANLLILTWVGS</sequence>